<dbReference type="EMBL" id="CP000247">
    <property type="protein sequence ID" value="ABG72435.1"/>
    <property type="molecule type" value="Genomic_DNA"/>
</dbReference>
<dbReference type="RefSeq" id="WP_000148581.1">
    <property type="nucleotide sequence ID" value="NC_008253.1"/>
</dbReference>
<dbReference type="SMR" id="Q0T9E4"/>
<dbReference type="GeneID" id="93777580"/>
<dbReference type="KEGG" id="ecp:ECP_4494"/>
<dbReference type="HOGENOM" id="CLU_128576_0_0_6"/>
<dbReference type="Proteomes" id="UP000009182">
    <property type="component" value="Chromosome"/>
</dbReference>
<dbReference type="GO" id="GO:0009347">
    <property type="term" value="C:aspartate carbamoyltransferase complex"/>
    <property type="evidence" value="ECO:0007669"/>
    <property type="project" value="InterPro"/>
</dbReference>
<dbReference type="GO" id="GO:0046872">
    <property type="term" value="F:metal ion binding"/>
    <property type="evidence" value="ECO:0007669"/>
    <property type="project" value="UniProtKB-KW"/>
</dbReference>
<dbReference type="GO" id="GO:0006207">
    <property type="term" value="P:'de novo' pyrimidine nucleobase biosynthetic process"/>
    <property type="evidence" value="ECO:0007669"/>
    <property type="project" value="InterPro"/>
</dbReference>
<dbReference type="GO" id="GO:0006221">
    <property type="term" value="P:pyrimidine nucleotide biosynthetic process"/>
    <property type="evidence" value="ECO:0007669"/>
    <property type="project" value="UniProtKB-UniRule"/>
</dbReference>
<dbReference type="FunFam" id="2.30.30.20:FF:000001">
    <property type="entry name" value="Aspartate carbamoyltransferase regulatory chain"/>
    <property type="match status" value="1"/>
</dbReference>
<dbReference type="FunFam" id="3.30.70.140:FF:000001">
    <property type="entry name" value="Aspartate carbamoyltransferase regulatory chain"/>
    <property type="match status" value="1"/>
</dbReference>
<dbReference type="Gene3D" id="2.30.30.20">
    <property type="entry name" value="Aspartate carbamoyltransferase regulatory subunit, C-terminal domain"/>
    <property type="match status" value="1"/>
</dbReference>
<dbReference type="Gene3D" id="3.30.70.140">
    <property type="entry name" value="Aspartate carbamoyltransferase regulatory subunit, N-terminal domain"/>
    <property type="match status" value="1"/>
</dbReference>
<dbReference type="HAMAP" id="MF_00002">
    <property type="entry name" value="Asp_carb_tr_reg"/>
    <property type="match status" value="1"/>
</dbReference>
<dbReference type="InterPro" id="IPR020545">
    <property type="entry name" value="Asp_carbamoyltransf_reg_N"/>
</dbReference>
<dbReference type="InterPro" id="IPR002801">
    <property type="entry name" value="Asp_carbamoylTrfase_reg"/>
</dbReference>
<dbReference type="InterPro" id="IPR020542">
    <property type="entry name" value="Asp_carbamoyltrfase_reg_C"/>
</dbReference>
<dbReference type="InterPro" id="IPR036792">
    <property type="entry name" value="Asp_carbatrfase_reg_C_sf"/>
</dbReference>
<dbReference type="InterPro" id="IPR036793">
    <property type="entry name" value="Asp_carbatrfase_reg_N_sf"/>
</dbReference>
<dbReference type="NCBIfam" id="TIGR00240">
    <property type="entry name" value="ATCase_reg"/>
    <property type="match status" value="1"/>
</dbReference>
<dbReference type="PANTHER" id="PTHR35805">
    <property type="entry name" value="ASPARTATE CARBAMOYLTRANSFERASE REGULATORY CHAIN"/>
    <property type="match status" value="1"/>
</dbReference>
<dbReference type="PANTHER" id="PTHR35805:SF1">
    <property type="entry name" value="ASPARTATE CARBAMOYLTRANSFERASE REGULATORY CHAIN"/>
    <property type="match status" value="1"/>
</dbReference>
<dbReference type="Pfam" id="PF01948">
    <property type="entry name" value="PyrI"/>
    <property type="match status" value="1"/>
</dbReference>
<dbReference type="Pfam" id="PF02748">
    <property type="entry name" value="PyrI_C"/>
    <property type="match status" value="1"/>
</dbReference>
<dbReference type="SUPFAM" id="SSF57825">
    <property type="entry name" value="Aspartate carbamoyltransferase, Regulatory-chain, C-terminal domain"/>
    <property type="match status" value="1"/>
</dbReference>
<dbReference type="SUPFAM" id="SSF54893">
    <property type="entry name" value="Aspartate carbamoyltransferase, Regulatory-chain, N-terminal domain"/>
    <property type="match status" value="1"/>
</dbReference>
<reference key="1">
    <citation type="journal article" date="2006" name="Mol. Microbiol.">
        <title>Role of pathogenicity island-associated integrases in the genome plasticity of uropathogenic Escherichia coli strain 536.</title>
        <authorList>
            <person name="Hochhut B."/>
            <person name="Wilde C."/>
            <person name="Balling G."/>
            <person name="Middendorf B."/>
            <person name="Dobrindt U."/>
            <person name="Brzuszkiewicz E."/>
            <person name="Gottschalk G."/>
            <person name="Carniel E."/>
            <person name="Hacker J."/>
        </authorList>
    </citation>
    <scope>NUCLEOTIDE SEQUENCE [LARGE SCALE GENOMIC DNA]</scope>
    <source>
        <strain>536 / UPEC</strain>
    </source>
</reference>
<keyword id="KW-0479">Metal-binding</keyword>
<keyword id="KW-0665">Pyrimidine biosynthesis</keyword>
<keyword id="KW-0862">Zinc</keyword>
<protein>
    <recommendedName>
        <fullName evidence="1">Aspartate carbamoyltransferase regulatory chain</fullName>
    </recommendedName>
</protein>
<proteinExistence type="inferred from homology"/>
<organism>
    <name type="scientific">Escherichia coli O6:K15:H31 (strain 536 / UPEC)</name>
    <dbReference type="NCBI Taxonomy" id="362663"/>
    <lineage>
        <taxon>Bacteria</taxon>
        <taxon>Pseudomonadati</taxon>
        <taxon>Pseudomonadota</taxon>
        <taxon>Gammaproteobacteria</taxon>
        <taxon>Enterobacterales</taxon>
        <taxon>Enterobacteriaceae</taxon>
        <taxon>Escherichia</taxon>
    </lineage>
</organism>
<comment type="function">
    <text evidence="1">Involved in allosteric regulation of aspartate carbamoyltransferase.</text>
</comment>
<comment type="cofactor">
    <cofactor evidence="1">
        <name>Zn(2+)</name>
        <dbReference type="ChEBI" id="CHEBI:29105"/>
    </cofactor>
    <text evidence="1">Binds 1 zinc ion per subunit.</text>
</comment>
<comment type="subunit">
    <text evidence="1">Contains catalytic and regulatory chains.</text>
</comment>
<comment type="similarity">
    <text evidence="1">Belongs to the PyrI family.</text>
</comment>
<gene>
    <name evidence="1" type="primary">pyrI</name>
    <name type="ordered locus">ECP_4494</name>
</gene>
<name>PYRI_ECOL5</name>
<feature type="chain" id="PRO_1000000033" description="Aspartate carbamoyltransferase regulatory chain">
    <location>
        <begin position="1"/>
        <end position="153"/>
    </location>
</feature>
<feature type="binding site" evidence="1">
    <location>
        <position position="109"/>
    </location>
    <ligand>
        <name>Zn(2+)</name>
        <dbReference type="ChEBI" id="CHEBI:29105"/>
    </ligand>
</feature>
<feature type="binding site" evidence="1">
    <location>
        <position position="114"/>
    </location>
    <ligand>
        <name>Zn(2+)</name>
        <dbReference type="ChEBI" id="CHEBI:29105"/>
    </ligand>
</feature>
<feature type="binding site" evidence="1">
    <location>
        <position position="138"/>
    </location>
    <ligand>
        <name>Zn(2+)</name>
        <dbReference type="ChEBI" id="CHEBI:29105"/>
    </ligand>
</feature>
<feature type="binding site" evidence="1">
    <location>
        <position position="141"/>
    </location>
    <ligand>
        <name>Zn(2+)</name>
        <dbReference type="ChEBI" id="CHEBI:29105"/>
    </ligand>
</feature>
<evidence type="ECO:0000255" key="1">
    <source>
        <dbReference type="HAMAP-Rule" id="MF_00002"/>
    </source>
</evidence>
<accession>Q0T9E4</accession>
<sequence length="153" mass="17121">MTHDNKLQVEAIKRGTVIDHIPAQIGFKLLSLFKLTETDQRITIGLNLPSGEMGRKDLIKIENTFLSEDQVDQLALYAPQATVNRIDNYEVVGKSRPSLPERIDNVLVCPNSNCISHAEPVSSSFAVRKRANDIALKCKYCEKEFSHNVVLAN</sequence>